<reference key="1">
    <citation type="journal article" date="2008" name="BMC Genomics">
        <title>The genome of Aeromonas salmonicida subsp. salmonicida A449: insights into the evolution of a fish pathogen.</title>
        <authorList>
            <person name="Reith M.E."/>
            <person name="Singh R.K."/>
            <person name="Curtis B."/>
            <person name="Boyd J.M."/>
            <person name="Bouevitch A."/>
            <person name="Kimball J."/>
            <person name="Munholland J."/>
            <person name="Murphy C."/>
            <person name="Sarty D."/>
            <person name="Williams J."/>
            <person name="Nash J.H."/>
            <person name="Johnson S.C."/>
            <person name="Brown L.L."/>
        </authorList>
    </citation>
    <scope>NUCLEOTIDE SEQUENCE [LARGE SCALE GENOMIC DNA]</scope>
    <source>
        <strain>A449</strain>
    </source>
</reference>
<protein>
    <recommendedName>
        <fullName evidence="1">ATP-dependent protease subunit HslV</fullName>
        <ecNumber evidence="1">3.4.25.2</ecNumber>
    </recommendedName>
</protein>
<feature type="chain" id="PRO_1000012571" description="ATP-dependent protease subunit HslV">
    <location>
        <begin position="1"/>
        <end position="177"/>
    </location>
</feature>
<feature type="active site" evidence="1">
    <location>
        <position position="2"/>
    </location>
</feature>
<feature type="binding site" evidence="1">
    <location>
        <position position="157"/>
    </location>
    <ligand>
        <name>Na(+)</name>
        <dbReference type="ChEBI" id="CHEBI:29101"/>
    </ligand>
</feature>
<feature type="binding site" evidence="1">
    <location>
        <position position="160"/>
    </location>
    <ligand>
        <name>Na(+)</name>
        <dbReference type="ChEBI" id="CHEBI:29101"/>
    </ligand>
</feature>
<feature type="binding site" evidence="1">
    <location>
        <position position="163"/>
    </location>
    <ligand>
        <name>Na(+)</name>
        <dbReference type="ChEBI" id="CHEBI:29101"/>
    </ligand>
</feature>
<name>HSLV_AERS4</name>
<gene>
    <name evidence="1" type="primary">hslV</name>
    <name type="ordered locus">ASA_0200</name>
</gene>
<evidence type="ECO:0000255" key="1">
    <source>
        <dbReference type="HAMAP-Rule" id="MF_00248"/>
    </source>
</evidence>
<comment type="function">
    <text evidence="1">Protease subunit of a proteasome-like degradation complex believed to be a general protein degrading machinery.</text>
</comment>
<comment type="catalytic activity">
    <reaction evidence="1">
        <text>ATP-dependent cleavage of peptide bonds with broad specificity.</text>
        <dbReference type="EC" id="3.4.25.2"/>
    </reaction>
</comment>
<comment type="activity regulation">
    <text evidence="1">Allosterically activated by HslU binding.</text>
</comment>
<comment type="subunit">
    <text evidence="1">A double ring-shaped homohexamer of HslV is capped on each side by a ring-shaped HslU homohexamer. The assembly of the HslU/HslV complex is dependent on binding of ATP.</text>
</comment>
<comment type="subcellular location">
    <subcellularLocation>
        <location evidence="1">Cytoplasm</location>
    </subcellularLocation>
</comment>
<comment type="similarity">
    <text evidence="1">Belongs to the peptidase T1B family. HslV subfamily.</text>
</comment>
<organism>
    <name type="scientific">Aeromonas salmonicida (strain A449)</name>
    <dbReference type="NCBI Taxonomy" id="382245"/>
    <lineage>
        <taxon>Bacteria</taxon>
        <taxon>Pseudomonadati</taxon>
        <taxon>Pseudomonadota</taxon>
        <taxon>Gammaproteobacteria</taxon>
        <taxon>Aeromonadales</taxon>
        <taxon>Aeromonadaceae</taxon>
        <taxon>Aeromonas</taxon>
    </lineage>
</organism>
<accession>A4SHM2</accession>
<proteinExistence type="inferred from homology"/>
<dbReference type="EC" id="3.4.25.2" evidence="1"/>
<dbReference type="EMBL" id="CP000644">
    <property type="protein sequence ID" value="ABO88394.1"/>
    <property type="molecule type" value="Genomic_DNA"/>
</dbReference>
<dbReference type="RefSeq" id="WP_005318389.1">
    <property type="nucleotide sequence ID" value="NC_009348.1"/>
</dbReference>
<dbReference type="SMR" id="A4SHM2"/>
<dbReference type="STRING" id="29491.GCA_000820065_01273"/>
<dbReference type="MEROPS" id="T01.007"/>
<dbReference type="GeneID" id="79881798"/>
<dbReference type="KEGG" id="asa:ASA_0200"/>
<dbReference type="eggNOG" id="COG5405">
    <property type="taxonomic scope" value="Bacteria"/>
</dbReference>
<dbReference type="HOGENOM" id="CLU_093872_1_0_6"/>
<dbReference type="Proteomes" id="UP000000225">
    <property type="component" value="Chromosome"/>
</dbReference>
<dbReference type="GO" id="GO:0009376">
    <property type="term" value="C:HslUV protease complex"/>
    <property type="evidence" value="ECO:0007669"/>
    <property type="project" value="UniProtKB-UniRule"/>
</dbReference>
<dbReference type="GO" id="GO:0005839">
    <property type="term" value="C:proteasome core complex"/>
    <property type="evidence" value="ECO:0007669"/>
    <property type="project" value="InterPro"/>
</dbReference>
<dbReference type="GO" id="GO:0046872">
    <property type="term" value="F:metal ion binding"/>
    <property type="evidence" value="ECO:0007669"/>
    <property type="project" value="UniProtKB-KW"/>
</dbReference>
<dbReference type="GO" id="GO:0004298">
    <property type="term" value="F:threonine-type endopeptidase activity"/>
    <property type="evidence" value="ECO:0007669"/>
    <property type="project" value="UniProtKB-KW"/>
</dbReference>
<dbReference type="GO" id="GO:0051603">
    <property type="term" value="P:proteolysis involved in protein catabolic process"/>
    <property type="evidence" value="ECO:0007669"/>
    <property type="project" value="InterPro"/>
</dbReference>
<dbReference type="CDD" id="cd01913">
    <property type="entry name" value="protease_HslV"/>
    <property type="match status" value="1"/>
</dbReference>
<dbReference type="FunFam" id="3.60.20.10:FF:000002">
    <property type="entry name" value="ATP-dependent protease subunit HslV"/>
    <property type="match status" value="1"/>
</dbReference>
<dbReference type="Gene3D" id="3.60.20.10">
    <property type="entry name" value="Glutamine Phosphoribosylpyrophosphate, subunit 1, domain 1"/>
    <property type="match status" value="1"/>
</dbReference>
<dbReference type="HAMAP" id="MF_00248">
    <property type="entry name" value="HslV"/>
    <property type="match status" value="1"/>
</dbReference>
<dbReference type="InterPro" id="IPR022281">
    <property type="entry name" value="ATP-dep_Prtase_HsIV_su"/>
</dbReference>
<dbReference type="InterPro" id="IPR029055">
    <property type="entry name" value="Ntn_hydrolases_N"/>
</dbReference>
<dbReference type="InterPro" id="IPR001353">
    <property type="entry name" value="Proteasome_sua/b"/>
</dbReference>
<dbReference type="InterPro" id="IPR023333">
    <property type="entry name" value="Proteasome_suB-type"/>
</dbReference>
<dbReference type="NCBIfam" id="TIGR03692">
    <property type="entry name" value="ATP_dep_HslV"/>
    <property type="match status" value="1"/>
</dbReference>
<dbReference type="NCBIfam" id="NF003964">
    <property type="entry name" value="PRK05456.1"/>
    <property type="match status" value="1"/>
</dbReference>
<dbReference type="PANTHER" id="PTHR32194:SF0">
    <property type="entry name" value="ATP-DEPENDENT PROTEASE SUBUNIT HSLV"/>
    <property type="match status" value="1"/>
</dbReference>
<dbReference type="PANTHER" id="PTHR32194">
    <property type="entry name" value="METALLOPROTEASE TLDD"/>
    <property type="match status" value="1"/>
</dbReference>
<dbReference type="Pfam" id="PF00227">
    <property type="entry name" value="Proteasome"/>
    <property type="match status" value="1"/>
</dbReference>
<dbReference type="PIRSF" id="PIRSF039093">
    <property type="entry name" value="HslV"/>
    <property type="match status" value="1"/>
</dbReference>
<dbReference type="SUPFAM" id="SSF56235">
    <property type="entry name" value="N-terminal nucleophile aminohydrolases (Ntn hydrolases)"/>
    <property type="match status" value="1"/>
</dbReference>
<dbReference type="PROSITE" id="PS51476">
    <property type="entry name" value="PROTEASOME_BETA_2"/>
    <property type="match status" value="1"/>
</dbReference>
<keyword id="KW-0021">Allosteric enzyme</keyword>
<keyword id="KW-0963">Cytoplasm</keyword>
<keyword id="KW-0378">Hydrolase</keyword>
<keyword id="KW-0479">Metal-binding</keyword>
<keyword id="KW-0645">Protease</keyword>
<keyword id="KW-0915">Sodium</keyword>
<keyword id="KW-0888">Threonine protease</keyword>
<sequence length="177" mass="18901">MTTIVSVRRNGQVVIGGDGQVSLGNTVMKGNARKVHRLYNGKVLAGFAGGTADAFTLLERFEAKLQAHQGNLERAAVALAKDWRTDRALRRLEALLAVADEHKSFIITGNGDVVQPEQDLIAIGSGGNFAQSAAIALLENTELDAKTIVEKSLKIAGDICVFTNGNHTIEVLDYSAK</sequence>